<name>SLFN5_MOUSE</name>
<feature type="chain" id="PRO_0000282983" description="Schlafen family member 5">
    <location>
        <begin position="1"/>
        <end position="884"/>
    </location>
</feature>
<feature type="binding site" evidence="1">
    <location>
        <begin position="574"/>
        <end position="581"/>
    </location>
    <ligand>
        <name>ATP</name>
        <dbReference type="ChEBI" id="CHEBI:30616"/>
    </ligand>
</feature>
<feature type="sequence conflict" description="In Ref. 4; AAI17911." evidence="3" ref="4">
    <original>F</original>
    <variation>I</variation>
    <location>
        <position position="193"/>
    </location>
</feature>
<feature type="sequence conflict" description="In Ref. 1; AAP30074/AAP30075." evidence="3" ref="1">
    <original>I</original>
    <variation>T</variation>
    <location>
        <position position="515"/>
    </location>
</feature>
<feature type="sequence conflict" description="In Ref. 1; AAP30074/AAP30075." evidence="3" ref="1">
    <original>Q</original>
    <variation>K</variation>
    <location>
        <position position="518"/>
    </location>
</feature>
<feature type="sequence conflict" description="In Ref. 1; AAP30074/AAP30075." evidence="3" ref="1">
    <original>N</original>
    <variation>D</variation>
    <location>
        <position position="601"/>
    </location>
</feature>
<feature type="sequence conflict" description="In Ref. 2; BAC29447." evidence="3" ref="2">
    <original>T</original>
    <variation>A</variation>
    <location>
        <position position="713"/>
    </location>
</feature>
<dbReference type="EMBL" id="AY261804">
    <property type="protein sequence ID" value="AAP30074.1"/>
    <property type="molecule type" value="mRNA"/>
</dbReference>
<dbReference type="EMBL" id="AY261805">
    <property type="protein sequence ID" value="AAP30075.1"/>
    <property type="molecule type" value="mRNA"/>
</dbReference>
<dbReference type="EMBL" id="AK036486">
    <property type="protein sequence ID" value="BAC29447.1"/>
    <property type="molecule type" value="mRNA"/>
</dbReference>
<dbReference type="EMBL" id="AK040359">
    <property type="protein sequence ID" value="BAE20578.1"/>
    <property type="molecule type" value="mRNA"/>
</dbReference>
<dbReference type="EMBL" id="AL603745">
    <property type="status" value="NOT_ANNOTATED_CDS"/>
    <property type="molecule type" value="Genomic_DNA"/>
</dbReference>
<dbReference type="EMBL" id="BC117909">
    <property type="protein sequence ID" value="AAI17910.1"/>
    <property type="molecule type" value="mRNA"/>
</dbReference>
<dbReference type="EMBL" id="BC117910">
    <property type="protein sequence ID" value="AAI17911.1"/>
    <property type="molecule type" value="mRNA"/>
</dbReference>
<dbReference type="CCDS" id="CCDS25153.1"/>
<dbReference type="RefSeq" id="NP_899024.3">
    <property type="nucleotide sequence ID" value="NM_183201.4"/>
</dbReference>
<dbReference type="RefSeq" id="XP_006533637.1">
    <property type="nucleotide sequence ID" value="XM_006533574.4"/>
</dbReference>
<dbReference type="RefSeq" id="XP_006533642.1">
    <property type="nucleotide sequence ID" value="XM_006533579.3"/>
</dbReference>
<dbReference type="RefSeq" id="XP_006533643.1">
    <property type="nucleotide sequence ID" value="XM_006533580.3"/>
</dbReference>
<dbReference type="RefSeq" id="XP_017170104.1">
    <property type="nucleotide sequence ID" value="XM_017314615.3"/>
</dbReference>
<dbReference type="RefSeq" id="XP_017170105.1">
    <property type="nucleotide sequence ID" value="XM_017314616.3"/>
</dbReference>
<dbReference type="RefSeq" id="XP_017170106.1">
    <property type="nucleotide sequence ID" value="XM_017314617.3"/>
</dbReference>
<dbReference type="RefSeq" id="XP_017170107.1">
    <property type="nucleotide sequence ID" value="XM_017314618.1"/>
</dbReference>
<dbReference type="RefSeq" id="XP_036012670.1">
    <property type="nucleotide sequence ID" value="XM_036156777.1"/>
</dbReference>
<dbReference type="RefSeq" id="XP_036012671.1">
    <property type="nucleotide sequence ID" value="XM_036156778.1"/>
</dbReference>
<dbReference type="SMR" id="Q8CBA2"/>
<dbReference type="BioGRID" id="236519">
    <property type="interactions" value="2"/>
</dbReference>
<dbReference type="FunCoup" id="Q8CBA2">
    <property type="interactions" value="476"/>
</dbReference>
<dbReference type="STRING" id="10090.ENSMUSP00000064819"/>
<dbReference type="iPTMnet" id="Q8CBA2"/>
<dbReference type="PhosphoSitePlus" id="Q8CBA2"/>
<dbReference type="jPOST" id="Q8CBA2"/>
<dbReference type="PaxDb" id="10090-ENSMUSP00000064819"/>
<dbReference type="PeptideAtlas" id="Q8CBA2"/>
<dbReference type="ProteomicsDB" id="261079"/>
<dbReference type="Antibodypedia" id="2910">
    <property type="antibodies" value="28 antibodies from 15 providers"/>
</dbReference>
<dbReference type="DNASU" id="327978"/>
<dbReference type="Ensembl" id="ENSMUST00000067443.10">
    <property type="protein sequence ID" value="ENSMUSP00000064819.3"/>
    <property type="gene ID" value="ENSMUSG00000054404.14"/>
</dbReference>
<dbReference type="Ensembl" id="ENSMUST00000108157.2">
    <property type="protein sequence ID" value="ENSMUSP00000103792.2"/>
    <property type="gene ID" value="ENSMUSG00000054404.14"/>
</dbReference>
<dbReference type="GeneID" id="327978"/>
<dbReference type="KEGG" id="mmu:327978"/>
<dbReference type="UCSC" id="uc007knz.2">
    <property type="organism name" value="mouse"/>
</dbReference>
<dbReference type="AGR" id="MGI:1329004"/>
<dbReference type="CTD" id="162394"/>
<dbReference type="MGI" id="MGI:1329004">
    <property type="gene designation" value="Slfn5"/>
</dbReference>
<dbReference type="VEuPathDB" id="HostDB:ENSMUSG00000054404"/>
<dbReference type="eggNOG" id="ENOG502QWKG">
    <property type="taxonomic scope" value="Eukaryota"/>
</dbReference>
<dbReference type="GeneTree" id="ENSGT00410000025651"/>
<dbReference type="HOGENOM" id="CLU_007071_0_0_1"/>
<dbReference type="InParanoid" id="Q8CBA2"/>
<dbReference type="OMA" id="RTVCTHK"/>
<dbReference type="OrthoDB" id="6052143at2759"/>
<dbReference type="PhylomeDB" id="Q8CBA2"/>
<dbReference type="TreeFam" id="TF337168"/>
<dbReference type="BioGRID-ORCS" id="327978">
    <property type="hits" value="0 hits in 77 CRISPR screens"/>
</dbReference>
<dbReference type="ChiTaRS" id="Slfn5">
    <property type="organism name" value="mouse"/>
</dbReference>
<dbReference type="PRO" id="PR:Q8CBA2"/>
<dbReference type="Proteomes" id="UP000000589">
    <property type="component" value="Chromosome 11"/>
</dbReference>
<dbReference type="RNAct" id="Q8CBA2">
    <property type="molecule type" value="protein"/>
</dbReference>
<dbReference type="Bgee" id="ENSMUSG00000054404">
    <property type="expression patterns" value="Expressed in hindlimb stylopod muscle and 96 other cell types or tissues"/>
</dbReference>
<dbReference type="ExpressionAtlas" id="Q8CBA2">
    <property type="expression patterns" value="baseline and differential"/>
</dbReference>
<dbReference type="GO" id="GO:0005634">
    <property type="term" value="C:nucleus"/>
    <property type="evidence" value="ECO:0000314"/>
    <property type="project" value="MGI"/>
</dbReference>
<dbReference type="GO" id="GO:0005524">
    <property type="term" value="F:ATP binding"/>
    <property type="evidence" value="ECO:0007669"/>
    <property type="project" value="UniProtKB-KW"/>
</dbReference>
<dbReference type="GO" id="GO:0030154">
    <property type="term" value="P:cell differentiation"/>
    <property type="evidence" value="ECO:0007669"/>
    <property type="project" value="UniProtKB-KW"/>
</dbReference>
<dbReference type="FunFam" id="3.40.50.300:FF:001322">
    <property type="entry name" value="Schlafen family member 11"/>
    <property type="match status" value="1"/>
</dbReference>
<dbReference type="FunFam" id="3.30.950.30:FF:000001">
    <property type="entry name" value="Schlafen family member 14"/>
    <property type="match status" value="1"/>
</dbReference>
<dbReference type="Gene3D" id="3.40.50.300">
    <property type="entry name" value="P-loop containing nucleotide triphosphate hydrolases"/>
    <property type="match status" value="1"/>
</dbReference>
<dbReference type="Gene3D" id="3.30.950.30">
    <property type="entry name" value="Schlafen, AAA domain"/>
    <property type="match status" value="1"/>
</dbReference>
<dbReference type="InterPro" id="IPR027417">
    <property type="entry name" value="P-loop_NTPase"/>
</dbReference>
<dbReference type="InterPro" id="IPR031450">
    <property type="entry name" value="Poxin-SLFN/SLFN_N"/>
</dbReference>
<dbReference type="InterPro" id="IPR029684">
    <property type="entry name" value="Schlafen"/>
</dbReference>
<dbReference type="InterPro" id="IPR007421">
    <property type="entry name" value="Schlafen_AlbA_2_dom"/>
</dbReference>
<dbReference type="InterPro" id="IPR038461">
    <property type="entry name" value="Schlafen_AlbA_2_dom_sf"/>
</dbReference>
<dbReference type="InterPro" id="IPR018647">
    <property type="entry name" value="SLFN_3-like_DNA/RNA_helicase"/>
</dbReference>
<dbReference type="InterPro" id="IPR048729">
    <property type="entry name" value="SLFN_GTPase-like"/>
</dbReference>
<dbReference type="InterPro" id="IPR027785">
    <property type="entry name" value="UvrD-like_helicase_C"/>
</dbReference>
<dbReference type="PANTHER" id="PTHR12155">
    <property type="entry name" value="SCHLAFEN"/>
    <property type="match status" value="1"/>
</dbReference>
<dbReference type="PANTHER" id="PTHR12155:SF26">
    <property type="entry name" value="SCHLAFEN FAMILY MEMBER 5"/>
    <property type="match status" value="1"/>
</dbReference>
<dbReference type="Pfam" id="PF17057">
    <property type="entry name" value="B3R"/>
    <property type="match status" value="1"/>
</dbReference>
<dbReference type="Pfam" id="PF09848">
    <property type="entry name" value="SLFN-g3_helicase"/>
    <property type="match status" value="1"/>
</dbReference>
<dbReference type="Pfam" id="PF04326">
    <property type="entry name" value="SLFN_AlbA_2"/>
    <property type="match status" value="1"/>
</dbReference>
<dbReference type="Pfam" id="PF21026">
    <property type="entry name" value="SLFN_GTPase-like"/>
    <property type="match status" value="1"/>
</dbReference>
<dbReference type="Pfam" id="PF13538">
    <property type="entry name" value="UvrD_C_2"/>
    <property type="match status" value="1"/>
</dbReference>
<dbReference type="SUPFAM" id="SSF52540">
    <property type="entry name" value="P-loop containing nucleoside triphosphate hydrolases"/>
    <property type="match status" value="1"/>
</dbReference>
<keyword id="KW-0067">ATP-binding</keyword>
<keyword id="KW-0221">Differentiation</keyword>
<keyword id="KW-0547">Nucleotide-binding</keyword>
<keyword id="KW-1185">Reference proteome</keyword>
<sequence>MSFLEDLELNFAECIQDGGKATLGVRQREEMDTTHCMKQNEIISQAVCALLNSGGGVVRVEIENGDYNFERDGVGLNLPPLFRNHLDEMLYGKLFLIYVSSWDVAASHVRLATLCSNLYHRCGTFTEVMDPEKALKFLKRVQDPRILGDSDSLNLQEAPVDDAQMILASDLFHSPQLQYLEKLNFTKSSHVEFQMFSADLSQGIRERLPKCVSALANSEGGYVFFGVHDETRHVIGCEKEKINCTNLKSTIDACIRKMPVYHFCGQNHKVQYELKFLEVYDKEALHGYVCAIKVERFCCAAFAKAPDSWEIKDNNKKPLTANDWASRMIEINPDLSSFPQMIPWKSMLNTTPCSKTVFTHKYLKCVEDLQKDYFPVSPNRITYTPESVYKDLFADYRGLRNLINMEMRCFSQGILIFSHSWAVDLGLQRRQDVICDALLISPNNVPILYTICNKWDLGNRHYSMKVARTLKQKLVNMGGYPGRLGIIPLVLPLGSHQRVRNDLEMPVYPESYNFITTQQVEALLQSLVIILFGFRPLLNEELNLESETVALLSDQQYGLLSTNLSKHREMFVHGLPGSGKTTLALMIVGKIRNVFNCQADNILYICENQSLKRFIVRKNVCQAVTRKTFMKNTFDNVQHIIVDEAQNFRTEDGNWYAKAKAITQRARDGPGVLYIFLDYFQINHLCCSGLPELQHQKPLLKLTRMLRSGDNITSYLQDIMHQIRENPPPNVPQEALMVGEELEWGPDVTGNLEITDNLNLEQMSVYVAEKCQSLWRSGYFTDVAVLFTRARDIEKCRDKLLLAMRRRSMSQLAEEPSLLVQVREGLDSLGSHVVLESVHRFSGMERSIVFGIIPMGSETAIFYNALLCLASRARTHLYIVKVVF</sequence>
<reference key="1">
    <citation type="journal article" date="2004" name="Int. Immunol.">
        <title>Modulation of T cell development and activation by novel members of the Schlafen (slfn) gene family harbouring an RNA helicase-like motif.</title>
        <authorList>
            <person name="Geserick P."/>
            <person name="Kaiser F."/>
            <person name="Klemm U."/>
            <person name="Kaufmann S.H.E."/>
            <person name="Zerrahn J."/>
        </authorList>
    </citation>
    <scope>NUCLEOTIDE SEQUENCE [MRNA]</scope>
    <scope>FUNCTION</scope>
    <source>
        <strain>129/SvJ</strain>
        <strain>C57BL/6J</strain>
    </source>
</reference>
<reference key="2">
    <citation type="journal article" date="2005" name="Science">
        <title>The transcriptional landscape of the mammalian genome.</title>
        <authorList>
            <person name="Carninci P."/>
            <person name="Kasukawa T."/>
            <person name="Katayama S."/>
            <person name="Gough J."/>
            <person name="Frith M.C."/>
            <person name="Maeda N."/>
            <person name="Oyama R."/>
            <person name="Ravasi T."/>
            <person name="Lenhard B."/>
            <person name="Wells C."/>
            <person name="Kodzius R."/>
            <person name="Shimokawa K."/>
            <person name="Bajic V.B."/>
            <person name="Brenner S.E."/>
            <person name="Batalov S."/>
            <person name="Forrest A.R."/>
            <person name="Zavolan M."/>
            <person name="Davis M.J."/>
            <person name="Wilming L.G."/>
            <person name="Aidinis V."/>
            <person name="Allen J.E."/>
            <person name="Ambesi-Impiombato A."/>
            <person name="Apweiler R."/>
            <person name="Aturaliya R.N."/>
            <person name="Bailey T.L."/>
            <person name="Bansal M."/>
            <person name="Baxter L."/>
            <person name="Beisel K.W."/>
            <person name="Bersano T."/>
            <person name="Bono H."/>
            <person name="Chalk A.M."/>
            <person name="Chiu K.P."/>
            <person name="Choudhary V."/>
            <person name="Christoffels A."/>
            <person name="Clutterbuck D.R."/>
            <person name="Crowe M.L."/>
            <person name="Dalla E."/>
            <person name="Dalrymple B.P."/>
            <person name="de Bono B."/>
            <person name="Della Gatta G."/>
            <person name="di Bernardo D."/>
            <person name="Down T."/>
            <person name="Engstrom P."/>
            <person name="Fagiolini M."/>
            <person name="Faulkner G."/>
            <person name="Fletcher C.F."/>
            <person name="Fukushima T."/>
            <person name="Furuno M."/>
            <person name="Futaki S."/>
            <person name="Gariboldi M."/>
            <person name="Georgii-Hemming P."/>
            <person name="Gingeras T.R."/>
            <person name="Gojobori T."/>
            <person name="Green R.E."/>
            <person name="Gustincich S."/>
            <person name="Harbers M."/>
            <person name="Hayashi Y."/>
            <person name="Hensch T.K."/>
            <person name="Hirokawa N."/>
            <person name="Hill D."/>
            <person name="Huminiecki L."/>
            <person name="Iacono M."/>
            <person name="Ikeo K."/>
            <person name="Iwama A."/>
            <person name="Ishikawa T."/>
            <person name="Jakt M."/>
            <person name="Kanapin A."/>
            <person name="Katoh M."/>
            <person name="Kawasawa Y."/>
            <person name="Kelso J."/>
            <person name="Kitamura H."/>
            <person name="Kitano H."/>
            <person name="Kollias G."/>
            <person name="Krishnan S.P."/>
            <person name="Kruger A."/>
            <person name="Kummerfeld S.K."/>
            <person name="Kurochkin I.V."/>
            <person name="Lareau L.F."/>
            <person name="Lazarevic D."/>
            <person name="Lipovich L."/>
            <person name="Liu J."/>
            <person name="Liuni S."/>
            <person name="McWilliam S."/>
            <person name="Madan Babu M."/>
            <person name="Madera M."/>
            <person name="Marchionni L."/>
            <person name="Matsuda H."/>
            <person name="Matsuzawa S."/>
            <person name="Miki H."/>
            <person name="Mignone F."/>
            <person name="Miyake S."/>
            <person name="Morris K."/>
            <person name="Mottagui-Tabar S."/>
            <person name="Mulder N."/>
            <person name="Nakano N."/>
            <person name="Nakauchi H."/>
            <person name="Ng P."/>
            <person name="Nilsson R."/>
            <person name="Nishiguchi S."/>
            <person name="Nishikawa S."/>
            <person name="Nori F."/>
            <person name="Ohara O."/>
            <person name="Okazaki Y."/>
            <person name="Orlando V."/>
            <person name="Pang K.C."/>
            <person name="Pavan W.J."/>
            <person name="Pavesi G."/>
            <person name="Pesole G."/>
            <person name="Petrovsky N."/>
            <person name="Piazza S."/>
            <person name="Reed J."/>
            <person name="Reid J.F."/>
            <person name="Ring B.Z."/>
            <person name="Ringwald M."/>
            <person name="Rost B."/>
            <person name="Ruan Y."/>
            <person name="Salzberg S.L."/>
            <person name="Sandelin A."/>
            <person name="Schneider C."/>
            <person name="Schoenbach C."/>
            <person name="Sekiguchi K."/>
            <person name="Semple C.A."/>
            <person name="Seno S."/>
            <person name="Sessa L."/>
            <person name="Sheng Y."/>
            <person name="Shibata Y."/>
            <person name="Shimada H."/>
            <person name="Shimada K."/>
            <person name="Silva D."/>
            <person name="Sinclair B."/>
            <person name="Sperling S."/>
            <person name="Stupka E."/>
            <person name="Sugiura K."/>
            <person name="Sultana R."/>
            <person name="Takenaka Y."/>
            <person name="Taki K."/>
            <person name="Tammoja K."/>
            <person name="Tan S.L."/>
            <person name="Tang S."/>
            <person name="Taylor M.S."/>
            <person name="Tegner J."/>
            <person name="Teichmann S.A."/>
            <person name="Ueda H.R."/>
            <person name="van Nimwegen E."/>
            <person name="Verardo R."/>
            <person name="Wei C.L."/>
            <person name="Yagi K."/>
            <person name="Yamanishi H."/>
            <person name="Zabarovsky E."/>
            <person name="Zhu S."/>
            <person name="Zimmer A."/>
            <person name="Hide W."/>
            <person name="Bult C."/>
            <person name="Grimmond S.M."/>
            <person name="Teasdale R.D."/>
            <person name="Liu E.T."/>
            <person name="Brusic V."/>
            <person name="Quackenbush J."/>
            <person name="Wahlestedt C."/>
            <person name="Mattick J.S."/>
            <person name="Hume D.A."/>
            <person name="Kai C."/>
            <person name="Sasaki D."/>
            <person name="Tomaru Y."/>
            <person name="Fukuda S."/>
            <person name="Kanamori-Katayama M."/>
            <person name="Suzuki M."/>
            <person name="Aoki J."/>
            <person name="Arakawa T."/>
            <person name="Iida J."/>
            <person name="Imamura K."/>
            <person name="Itoh M."/>
            <person name="Kato T."/>
            <person name="Kawaji H."/>
            <person name="Kawagashira N."/>
            <person name="Kawashima T."/>
            <person name="Kojima M."/>
            <person name="Kondo S."/>
            <person name="Konno H."/>
            <person name="Nakano K."/>
            <person name="Ninomiya N."/>
            <person name="Nishio T."/>
            <person name="Okada M."/>
            <person name="Plessy C."/>
            <person name="Shibata K."/>
            <person name="Shiraki T."/>
            <person name="Suzuki S."/>
            <person name="Tagami M."/>
            <person name="Waki K."/>
            <person name="Watahiki A."/>
            <person name="Okamura-Oho Y."/>
            <person name="Suzuki H."/>
            <person name="Kawai J."/>
            <person name="Hayashizaki Y."/>
        </authorList>
    </citation>
    <scope>NUCLEOTIDE SEQUENCE [LARGE SCALE MRNA]</scope>
    <source>
        <strain>C57BL/6J</strain>
        <tissue>Bone</tissue>
        <tissue>Thymus</tissue>
    </source>
</reference>
<reference key="3">
    <citation type="journal article" date="2009" name="PLoS Biol.">
        <title>Lineage-specific biology revealed by a finished genome assembly of the mouse.</title>
        <authorList>
            <person name="Church D.M."/>
            <person name="Goodstadt L."/>
            <person name="Hillier L.W."/>
            <person name="Zody M.C."/>
            <person name="Goldstein S."/>
            <person name="She X."/>
            <person name="Bult C.J."/>
            <person name="Agarwala R."/>
            <person name="Cherry J.L."/>
            <person name="DiCuccio M."/>
            <person name="Hlavina W."/>
            <person name="Kapustin Y."/>
            <person name="Meric P."/>
            <person name="Maglott D."/>
            <person name="Birtle Z."/>
            <person name="Marques A.C."/>
            <person name="Graves T."/>
            <person name="Zhou S."/>
            <person name="Teague B."/>
            <person name="Potamousis K."/>
            <person name="Churas C."/>
            <person name="Place M."/>
            <person name="Herschleb J."/>
            <person name="Runnheim R."/>
            <person name="Forrest D."/>
            <person name="Amos-Landgraf J."/>
            <person name="Schwartz D.C."/>
            <person name="Cheng Z."/>
            <person name="Lindblad-Toh K."/>
            <person name="Eichler E.E."/>
            <person name="Ponting C.P."/>
        </authorList>
    </citation>
    <scope>NUCLEOTIDE SEQUENCE [LARGE SCALE GENOMIC DNA]</scope>
    <source>
        <strain>C57BL/6J</strain>
    </source>
</reference>
<reference key="4">
    <citation type="journal article" date="2004" name="Genome Res.">
        <title>The status, quality, and expansion of the NIH full-length cDNA project: the Mammalian Gene Collection (MGC).</title>
        <authorList>
            <consortium name="The MGC Project Team"/>
        </authorList>
    </citation>
    <scope>NUCLEOTIDE SEQUENCE [LARGE SCALE MRNA]</scope>
</reference>
<reference key="5">
    <citation type="journal article" date="2010" name="Cell">
        <title>A tissue-specific atlas of mouse protein phosphorylation and expression.</title>
        <authorList>
            <person name="Huttlin E.L."/>
            <person name="Jedrychowski M.P."/>
            <person name="Elias J.E."/>
            <person name="Goswami T."/>
            <person name="Rad R."/>
            <person name="Beausoleil S.A."/>
            <person name="Villen J."/>
            <person name="Haas W."/>
            <person name="Sowa M.E."/>
            <person name="Gygi S.P."/>
        </authorList>
    </citation>
    <scope>IDENTIFICATION BY MASS SPECTROMETRY [LARGE SCALE ANALYSIS]</scope>
    <source>
        <tissue>Brown adipose tissue</tissue>
        <tissue>Heart</tissue>
        <tissue>Kidney</tissue>
        <tissue>Lung</tissue>
        <tissue>Spleen</tissue>
    </source>
</reference>
<organism>
    <name type="scientific">Mus musculus</name>
    <name type="common">Mouse</name>
    <dbReference type="NCBI Taxonomy" id="10090"/>
    <lineage>
        <taxon>Eukaryota</taxon>
        <taxon>Metazoa</taxon>
        <taxon>Chordata</taxon>
        <taxon>Craniata</taxon>
        <taxon>Vertebrata</taxon>
        <taxon>Euteleostomi</taxon>
        <taxon>Mammalia</taxon>
        <taxon>Eutheria</taxon>
        <taxon>Euarchontoglires</taxon>
        <taxon>Glires</taxon>
        <taxon>Rodentia</taxon>
        <taxon>Myomorpha</taxon>
        <taxon>Muroidea</taxon>
        <taxon>Muridae</taxon>
        <taxon>Murinae</taxon>
        <taxon>Mus</taxon>
        <taxon>Mus</taxon>
    </lineage>
</organism>
<protein>
    <recommendedName>
        <fullName>Schlafen family member 5</fullName>
    </recommendedName>
</protein>
<accession>Q8CBA2</accession>
<accession>Q148Z1</accession>
<accession>Q3V3H0</accession>
<accession>Q5QNT5</accession>
<accession>Q7TMA8</accession>
<proteinExistence type="evidence at protein level"/>
<evidence type="ECO:0000255" key="1"/>
<evidence type="ECO:0000269" key="2">
    <source>
    </source>
</evidence>
<evidence type="ECO:0000305" key="3"/>
<comment type="function">
    <text evidence="2">May have a role in hematopoietic cell differentiation.</text>
</comment>
<comment type="similarity">
    <text evidence="3">Belongs to the Schlafen family. Subgroup III subfamily.</text>
</comment>
<gene>
    <name type="primary">Slfn5</name>
</gene>